<sequence length="34" mass="3797">MEVNILAFIATALFILIPTAFLLIIYVKTVSQND</sequence>
<gene>
    <name evidence="1" type="primary">psbM</name>
    <name type="ordered locus">LopeCp020</name>
</gene>
<comment type="function">
    <text evidence="1">One of the components of the core complex of photosystem II (PSII). PSII is a light-driven water:plastoquinone oxidoreductase that uses light energy to abstract electrons from H(2)O, generating O(2) and a proton gradient subsequently used for ATP formation. It consists of a core antenna complex that captures photons, and an electron transfer chain that converts photonic excitation into a charge separation. This subunit is found at the monomer-monomer interface.</text>
</comment>
<comment type="subunit">
    <text evidence="1">PSII is composed of 1 copy each of membrane proteins PsbA, PsbB, PsbC, PsbD, PsbE, PsbF, PsbH, PsbI, PsbJ, PsbK, PsbL, PsbM, PsbT, PsbX, PsbY, PsbZ, Psb30/Ycf12, at least 3 peripheral proteins of the oxygen-evolving complex and a large number of cofactors. It forms dimeric complexes.</text>
</comment>
<comment type="subcellular location">
    <subcellularLocation>
        <location evidence="1">Plastid</location>
        <location evidence="1">Chloroplast thylakoid membrane</location>
        <topology evidence="1">Single-pass membrane protein</topology>
    </subcellularLocation>
</comment>
<comment type="similarity">
    <text evidence="1">Belongs to the PsbM family.</text>
</comment>
<evidence type="ECO:0000255" key="1">
    <source>
        <dbReference type="HAMAP-Rule" id="MF_00438"/>
    </source>
</evidence>
<accession>A8Y9F8</accession>
<organism>
    <name type="scientific">Lolium perenne</name>
    <name type="common">Perennial ryegrass</name>
    <dbReference type="NCBI Taxonomy" id="4522"/>
    <lineage>
        <taxon>Eukaryota</taxon>
        <taxon>Viridiplantae</taxon>
        <taxon>Streptophyta</taxon>
        <taxon>Embryophyta</taxon>
        <taxon>Tracheophyta</taxon>
        <taxon>Spermatophyta</taxon>
        <taxon>Magnoliopsida</taxon>
        <taxon>Liliopsida</taxon>
        <taxon>Poales</taxon>
        <taxon>Poaceae</taxon>
        <taxon>BOP clade</taxon>
        <taxon>Pooideae</taxon>
        <taxon>Poodae</taxon>
        <taxon>Poeae</taxon>
        <taxon>Poeae Chloroplast Group 2 (Poeae type)</taxon>
        <taxon>Loliodinae</taxon>
        <taxon>Loliinae</taxon>
        <taxon>Lolium</taxon>
    </lineage>
</organism>
<keyword id="KW-0150">Chloroplast</keyword>
<keyword id="KW-0472">Membrane</keyword>
<keyword id="KW-0602">Photosynthesis</keyword>
<keyword id="KW-0604">Photosystem II</keyword>
<keyword id="KW-0934">Plastid</keyword>
<keyword id="KW-0674">Reaction center</keyword>
<keyword id="KW-0793">Thylakoid</keyword>
<keyword id="KW-0812">Transmembrane</keyword>
<keyword id="KW-1133">Transmembrane helix</keyword>
<protein>
    <recommendedName>
        <fullName evidence="1">Photosystem II reaction center protein M</fullName>
        <shortName evidence="1">PSII-M</shortName>
    </recommendedName>
</protein>
<dbReference type="EMBL" id="AM777385">
    <property type="protein sequence ID" value="CAO85964.1"/>
    <property type="molecule type" value="Genomic_DNA"/>
</dbReference>
<dbReference type="RefSeq" id="YP_001531271.1">
    <property type="nucleotide sequence ID" value="NC_009950.1"/>
</dbReference>
<dbReference type="SMR" id="A8Y9F8"/>
<dbReference type="GeneID" id="5696648"/>
<dbReference type="KEGG" id="lper:5696648"/>
<dbReference type="GO" id="GO:0009535">
    <property type="term" value="C:chloroplast thylakoid membrane"/>
    <property type="evidence" value="ECO:0007669"/>
    <property type="project" value="UniProtKB-SubCell"/>
</dbReference>
<dbReference type="GO" id="GO:0009523">
    <property type="term" value="C:photosystem II"/>
    <property type="evidence" value="ECO:0007669"/>
    <property type="project" value="UniProtKB-KW"/>
</dbReference>
<dbReference type="GO" id="GO:0019684">
    <property type="term" value="P:photosynthesis, light reaction"/>
    <property type="evidence" value="ECO:0007669"/>
    <property type="project" value="InterPro"/>
</dbReference>
<dbReference type="HAMAP" id="MF_00438">
    <property type="entry name" value="PSII_PsbM"/>
    <property type="match status" value="1"/>
</dbReference>
<dbReference type="InterPro" id="IPR007826">
    <property type="entry name" value="PSII_PsbM"/>
</dbReference>
<dbReference type="InterPro" id="IPR037269">
    <property type="entry name" value="PSII_PsbM_sf"/>
</dbReference>
<dbReference type="NCBIfam" id="TIGR03038">
    <property type="entry name" value="PS_II_psbM"/>
    <property type="match status" value="1"/>
</dbReference>
<dbReference type="PANTHER" id="PTHR35774">
    <property type="entry name" value="PHOTOSYSTEM II REACTION CENTER PROTEIN M"/>
    <property type="match status" value="1"/>
</dbReference>
<dbReference type="PANTHER" id="PTHR35774:SF1">
    <property type="entry name" value="PHOTOSYSTEM II REACTION CENTER PROTEIN M"/>
    <property type="match status" value="1"/>
</dbReference>
<dbReference type="Pfam" id="PF05151">
    <property type="entry name" value="PsbM"/>
    <property type="match status" value="1"/>
</dbReference>
<dbReference type="SUPFAM" id="SSF161033">
    <property type="entry name" value="Photosystem II reaction center protein M, PsbM"/>
    <property type="match status" value="1"/>
</dbReference>
<proteinExistence type="inferred from homology"/>
<geneLocation type="chloroplast"/>
<feature type="chain" id="PRO_0000325742" description="Photosystem II reaction center protein M">
    <location>
        <begin position="1"/>
        <end position="34"/>
    </location>
</feature>
<feature type="transmembrane region" description="Helical" evidence="1">
    <location>
        <begin position="5"/>
        <end position="25"/>
    </location>
</feature>
<name>PSBM_LOLPR</name>
<reference key="1">
    <citation type="journal article" date="2008" name="PLoS ONE">
        <title>An optimized chloroplast DNA extraction protocol for grasses (Poaceae) proves suitable for whole plastid genome sequencing and SNP detection.</title>
        <authorList>
            <person name="Diekmann K."/>
            <person name="Hodkinson T.R."/>
            <person name="Fricke E."/>
            <person name="Barth S."/>
        </authorList>
    </citation>
    <scope>NUCLEOTIDE SEQUENCE [LARGE SCALE GENOMIC DNA]</scope>
    <source>
        <strain>cv. Cashel</strain>
    </source>
</reference>